<accession>A1TLY4</accession>
<name>PSRP_PARC0</name>
<gene>
    <name type="ordered locus">Aave_1381</name>
</gene>
<organism>
    <name type="scientific">Paracidovorax citrulli (strain AAC00-1)</name>
    <name type="common">Acidovorax citrulli</name>
    <dbReference type="NCBI Taxonomy" id="397945"/>
    <lineage>
        <taxon>Bacteria</taxon>
        <taxon>Pseudomonadati</taxon>
        <taxon>Pseudomonadota</taxon>
        <taxon>Betaproteobacteria</taxon>
        <taxon>Burkholderiales</taxon>
        <taxon>Comamonadaceae</taxon>
        <taxon>Paracidovorax</taxon>
    </lineage>
</organism>
<feature type="chain" id="PRO_0000316626" description="Putative phosphoenolpyruvate synthase regulatory protein">
    <location>
        <begin position="1"/>
        <end position="273"/>
    </location>
</feature>
<feature type="binding site" evidence="1">
    <location>
        <begin position="153"/>
        <end position="160"/>
    </location>
    <ligand>
        <name>ADP</name>
        <dbReference type="ChEBI" id="CHEBI:456216"/>
    </ligand>
</feature>
<protein>
    <recommendedName>
        <fullName evidence="1">Putative phosphoenolpyruvate synthase regulatory protein</fullName>
        <shortName evidence="1">PEP synthase regulatory protein</shortName>
        <shortName evidence="1">PSRP</shortName>
        <ecNumber evidence="1">2.7.11.33</ecNumber>
        <ecNumber evidence="1">2.7.4.28</ecNumber>
    </recommendedName>
    <alternativeName>
        <fullName evidence="1">Pyruvate, water dikinase regulatory protein</fullName>
    </alternativeName>
</protein>
<reference key="1">
    <citation type="submission" date="2006-12" db="EMBL/GenBank/DDBJ databases">
        <title>Complete sequence of Acidovorax avenae subsp. citrulli AAC00-1.</title>
        <authorList>
            <person name="Copeland A."/>
            <person name="Lucas S."/>
            <person name="Lapidus A."/>
            <person name="Barry K."/>
            <person name="Detter J.C."/>
            <person name="Glavina del Rio T."/>
            <person name="Dalin E."/>
            <person name="Tice H."/>
            <person name="Pitluck S."/>
            <person name="Kiss H."/>
            <person name="Brettin T."/>
            <person name="Bruce D."/>
            <person name="Han C."/>
            <person name="Tapia R."/>
            <person name="Gilna P."/>
            <person name="Schmutz J."/>
            <person name="Larimer F."/>
            <person name="Land M."/>
            <person name="Hauser L."/>
            <person name="Kyrpides N."/>
            <person name="Kim E."/>
            <person name="Stahl D."/>
            <person name="Richardson P."/>
        </authorList>
    </citation>
    <scope>NUCLEOTIDE SEQUENCE [LARGE SCALE GENOMIC DNA]</scope>
    <source>
        <strain>AAC00-1</strain>
    </source>
</reference>
<comment type="function">
    <text evidence="1">Bifunctional serine/threonine kinase and phosphorylase involved in the regulation of the phosphoenolpyruvate synthase (PEPS) by catalyzing its phosphorylation/dephosphorylation.</text>
</comment>
<comment type="catalytic activity">
    <reaction evidence="1">
        <text>[pyruvate, water dikinase] + ADP = [pyruvate, water dikinase]-phosphate + AMP + H(+)</text>
        <dbReference type="Rhea" id="RHEA:46020"/>
        <dbReference type="Rhea" id="RHEA-COMP:11425"/>
        <dbReference type="Rhea" id="RHEA-COMP:11426"/>
        <dbReference type="ChEBI" id="CHEBI:15378"/>
        <dbReference type="ChEBI" id="CHEBI:43176"/>
        <dbReference type="ChEBI" id="CHEBI:68546"/>
        <dbReference type="ChEBI" id="CHEBI:456215"/>
        <dbReference type="ChEBI" id="CHEBI:456216"/>
        <dbReference type="EC" id="2.7.11.33"/>
    </reaction>
</comment>
<comment type="catalytic activity">
    <reaction evidence="1">
        <text>[pyruvate, water dikinase]-phosphate + phosphate + H(+) = [pyruvate, water dikinase] + diphosphate</text>
        <dbReference type="Rhea" id="RHEA:48580"/>
        <dbReference type="Rhea" id="RHEA-COMP:11425"/>
        <dbReference type="Rhea" id="RHEA-COMP:11426"/>
        <dbReference type="ChEBI" id="CHEBI:15378"/>
        <dbReference type="ChEBI" id="CHEBI:33019"/>
        <dbReference type="ChEBI" id="CHEBI:43176"/>
        <dbReference type="ChEBI" id="CHEBI:43474"/>
        <dbReference type="ChEBI" id="CHEBI:68546"/>
        <dbReference type="EC" id="2.7.4.28"/>
    </reaction>
</comment>
<comment type="similarity">
    <text evidence="1">Belongs to the pyruvate, phosphate/water dikinase regulatory protein family. PSRP subfamily.</text>
</comment>
<evidence type="ECO:0000255" key="1">
    <source>
        <dbReference type="HAMAP-Rule" id="MF_01062"/>
    </source>
</evidence>
<keyword id="KW-0418">Kinase</keyword>
<keyword id="KW-0547">Nucleotide-binding</keyword>
<keyword id="KW-0723">Serine/threonine-protein kinase</keyword>
<keyword id="KW-0808">Transferase</keyword>
<sequence length="273" mass="30910">MHTRTVFFISDGTGITAETFGNAILAQFDIKPRHVRLPFIDTEDKAHQAVRRINHTAELEGKKPIVFTTLVNMSVLRIIQENCQGMLLDMFGTFIRPLEGELGIKSLHRVGRFADVSLSKEYTDRIEAINFSLDHDDGQSHRDLSGADVILVGVSRSGKTPTSLYLAMQCGLKVANYPLIPEDFERKQLPPALEPHRKKIFGLTILPERLSQIRNERRPGSKYADLANCRHEVAEAEAMMRRSGIRWLSTTTKSIEEIATTILQEVRPERLVY</sequence>
<proteinExistence type="inferred from homology"/>
<dbReference type="EC" id="2.7.11.33" evidence="1"/>
<dbReference type="EC" id="2.7.4.28" evidence="1"/>
<dbReference type="EMBL" id="CP000512">
    <property type="protein sequence ID" value="ABM31972.1"/>
    <property type="molecule type" value="Genomic_DNA"/>
</dbReference>
<dbReference type="RefSeq" id="WP_011794524.1">
    <property type="nucleotide sequence ID" value="NC_008752.1"/>
</dbReference>
<dbReference type="SMR" id="A1TLY4"/>
<dbReference type="STRING" id="397945.Aave_1381"/>
<dbReference type="GeneID" id="79791045"/>
<dbReference type="KEGG" id="aav:Aave_1381"/>
<dbReference type="eggNOG" id="COG1806">
    <property type="taxonomic scope" value="Bacteria"/>
</dbReference>
<dbReference type="HOGENOM" id="CLU_046206_1_0_4"/>
<dbReference type="OrthoDB" id="9782201at2"/>
<dbReference type="Proteomes" id="UP000002596">
    <property type="component" value="Chromosome"/>
</dbReference>
<dbReference type="GO" id="GO:0043531">
    <property type="term" value="F:ADP binding"/>
    <property type="evidence" value="ECO:0007669"/>
    <property type="project" value="UniProtKB-UniRule"/>
</dbReference>
<dbReference type="GO" id="GO:0005524">
    <property type="term" value="F:ATP binding"/>
    <property type="evidence" value="ECO:0007669"/>
    <property type="project" value="InterPro"/>
</dbReference>
<dbReference type="GO" id="GO:0016776">
    <property type="term" value="F:phosphotransferase activity, phosphate group as acceptor"/>
    <property type="evidence" value="ECO:0007669"/>
    <property type="project" value="UniProtKB-UniRule"/>
</dbReference>
<dbReference type="GO" id="GO:0004674">
    <property type="term" value="F:protein serine/threonine kinase activity"/>
    <property type="evidence" value="ECO:0007669"/>
    <property type="project" value="UniProtKB-UniRule"/>
</dbReference>
<dbReference type="HAMAP" id="MF_01062">
    <property type="entry name" value="PSRP"/>
    <property type="match status" value="1"/>
</dbReference>
<dbReference type="InterPro" id="IPR005177">
    <property type="entry name" value="Kinase-pyrophosphorylase"/>
</dbReference>
<dbReference type="InterPro" id="IPR026530">
    <property type="entry name" value="PSRP"/>
</dbReference>
<dbReference type="NCBIfam" id="NF003742">
    <property type="entry name" value="PRK05339.1"/>
    <property type="match status" value="1"/>
</dbReference>
<dbReference type="PANTHER" id="PTHR31756">
    <property type="entry name" value="PYRUVATE, PHOSPHATE DIKINASE REGULATORY PROTEIN 1, CHLOROPLASTIC"/>
    <property type="match status" value="1"/>
</dbReference>
<dbReference type="PANTHER" id="PTHR31756:SF3">
    <property type="entry name" value="PYRUVATE, PHOSPHATE DIKINASE REGULATORY PROTEIN 1, CHLOROPLASTIC"/>
    <property type="match status" value="1"/>
</dbReference>
<dbReference type="Pfam" id="PF03618">
    <property type="entry name" value="Kinase-PPPase"/>
    <property type="match status" value="1"/>
</dbReference>